<proteinExistence type="inferred from homology"/>
<dbReference type="EC" id="3.1.1.96" evidence="1"/>
<dbReference type="EMBL" id="CP000939">
    <property type="protein sequence ID" value="ACA44621.1"/>
    <property type="molecule type" value="Genomic_DNA"/>
</dbReference>
<dbReference type="RefSeq" id="WP_003357859.1">
    <property type="nucleotide sequence ID" value="NC_010516.1"/>
</dbReference>
<dbReference type="SMR" id="B1IME1"/>
<dbReference type="KEGG" id="cbb:CLD_1482"/>
<dbReference type="HOGENOM" id="CLU_076901_1_0_9"/>
<dbReference type="Proteomes" id="UP000008541">
    <property type="component" value="Chromosome"/>
</dbReference>
<dbReference type="GO" id="GO:0005737">
    <property type="term" value="C:cytoplasm"/>
    <property type="evidence" value="ECO:0007669"/>
    <property type="project" value="UniProtKB-SubCell"/>
</dbReference>
<dbReference type="GO" id="GO:0051500">
    <property type="term" value="F:D-tyrosyl-tRNA(Tyr) deacylase activity"/>
    <property type="evidence" value="ECO:0007669"/>
    <property type="project" value="TreeGrafter"/>
</dbReference>
<dbReference type="GO" id="GO:0106026">
    <property type="term" value="F:Gly-tRNA(Ala) deacylase activity"/>
    <property type="evidence" value="ECO:0007669"/>
    <property type="project" value="UniProtKB-UniRule"/>
</dbReference>
<dbReference type="GO" id="GO:0043908">
    <property type="term" value="F:Ser(Gly)-tRNA(Ala) hydrolase activity"/>
    <property type="evidence" value="ECO:0007669"/>
    <property type="project" value="UniProtKB-UniRule"/>
</dbReference>
<dbReference type="GO" id="GO:0000049">
    <property type="term" value="F:tRNA binding"/>
    <property type="evidence" value="ECO:0007669"/>
    <property type="project" value="UniProtKB-UniRule"/>
</dbReference>
<dbReference type="GO" id="GO:0019478">
    <property type="term" value="P:D-amino acid catabolic process"/>
    <property type="evidence" value="ECO:0007669"/>
    <property type="project" value="UniProtKB-UniRule"/>
</dbReference>
<dbReference type="CDD" id="cd00563">
    <property type="entry name" value="Dtyr_deacylase"/>
    <property type="match status" value="1"/>
</dbReference>
<dbReference type="FunFam" id="3.50.80.10:FF:000001">
    <property type="entry name" value="D-aminoacyl-tRNA deacylase"/>
    <property type="match status" value="1"/>
</dbReference>
<dbReference type="Gene3D" id="3.50.80.10">
    <property type="entry name" value="D-tyrosyl-tRNA(Tyr) deacylase"/>
    <property type="match status" value="1"/>
</dbReference>
<dbReference type="HAMAP" id="MF_00518">
    <property type="entry name" value="Deacylase_Dtd"/>
    <property type="match status" value="1"/>
</dbReference>
<dbReference type="InterPro" id="IPR003732">
    <property type="entry name" value="Daa-tRNA_deacyls_DTD"/>
</dbReference>
<dbReference type="InterPro" id="IPR023509">
    <property type="entry name" value="DTD-like_sf"/>
</dbReference>
<dbReference type="NCBIfam" id="TIGR00256">
    <property type="entry name" value="D-aminoacyl-tRNA deacylase"/>
    <property type="match status" value="1"/>
</dbReference>
<dbReference type="PANTHER" id="PTHR10472:SF5">
    <property type="entry name" value="D-AMINOACYL-TRNA DEACYLASE 1"/>
    <property type="match status" value="1"/>
</dbReference>
<dbReference type="PANTHER" id="PTHR10472">
    <property type="entry name" value="D-TYROSYL-TRNA TYR DEACYLASE"/>
    <property type="match status" value="1"/>
</dbReference>
<dbReference type="Pfam" id="PF02580">
    <property type="entry name" value="Tyr_Deacylase"/>
    <property type="match status" value="1"/>
</dbReference>
<dbReference type="SUPFAM" id="SSF69500">
    <property type="entry name" value="DTD-like"/>
    <property type="match status" value="1"/>
</dbReference>
<evidence type="ECO:0000255" key="1">
    <source>
        <dbReference type="HAMAP-Rule" id="MF_00518"/>
    </source>
</evidence>
<protein>
    <recommendedName>
        <fullName evidence="1">D-aminoacyl-tRNA deacylase</fullName>
        <shortName evidence="1">DTD</shortName>
        <ecNumber evidence="1">3.1.1.96</ecNumber>
    </recommendedName>
    <alternativeName>
        <fullName evidence="1">Gly-tRNA(Ala) deacylase</fullName>
    </alternativeName>
</protein>
<organism>
    <name type="scientific">Clostridium botulinum (strain Okra / Type B1)</name>
    <dbReference type="NCBI Taxonomy" id="498213"/>
    <lineage>
        <taxon>Bacteria</taxon>
        <taxon>Bacillati</taxon>
        <taxon>Bacillota</taxon>
        <taxon>Clostridia</taxon>
        <taxon>Eubacteriales</taxon>
        <taxon>Clostridiaceae</taxon>
        <taxon>Clostridium</taxon>
    </lineage>
</organism>
<comment type="function">
    <text evidence="1">An aminoacyl-tRNA editing enzyme that deacylates mischarged D-aminoacyl-tRNAs. Also deacylates mischarged glycyl-tRNA(Ala), protecting cells against glycine mischarging by AlaRS. Acts via tRNA-based rather than protein-based catalysis; rejects L-amino acids rather than detecting D-amino acids in the active site. By recycling D-aminoacyl-tRNA to D-amino acids and free tRNA molecules, this enzyme counteracts the toxicity associated with the formation of D-aminoacyl-tRNA entities in vivo and helps enforce protein L-homochirality.</text>
</comment>
<comment type="catalytic activity">
    <reaction evidence="1">
        <text>glycyl-tRNA(Ala) + H2O = tRNA(Ala) + glycine + H(+)</text>
        <dbReference type="Rhea" id="RHEA:53744"/>
        <dbReference type="Rhea" id="RHEA-COMP:9657"/>
        <dbReference type="Rhea" id="RHEA-COMP:13640"/>
        <dbReference type="ChEBI" id="CHEBI:15377"/>
        <dbReference type="ChEBI" id="CHEBI:15378"/>
        <dbReference type="ChEBI" id="CHEBI:57305"/>
        <dbReference type="ChEBI" id="CHEBI:78442"/>
        <dbReference type="ChEBI" id="CHEBI:78522"/>
        <dbReference type="EC" id="3.1.1.96"/>
    </reaction>
</comment>
<comment type="catalytic activity">
    <reaction evidence="1">
        <text>a D-aminoacyl-tRNA + H2O = a tRNA + a D-alpha-amino acid + H(+)</text>
        <dbReference type="Rhea" id="RHEA:13953"/>
        <dbReference type="Rhea" id="RHEA-COMP:10123"/>
        <dbReference type="Rhea" id="RHEA-COMP:10124"/>
        <dbReference type="ChEBI" id="CHEBI:15377"/>
        <dbReference type="ChEBI" id="CHEBI:15378"/>
        <dbReference type="ChEBI" id="CHEBI:59871"/>
        <dbReference type="ChEBI" id="CHEBI:78442"/>
        <dbReference type="ChEBI" id="CHEBI:79333"/>
        <dbReference type="EC" id="3.1.1.96"/>
    </reaction>
</comment>
<comment type="subunit">
    <text evidence="1">Homodimer.</text>
</comment>
<comment type="subcellular location">
    <subcellularLocation>
        <location evidence="1">Cytoplasm</location>
    </subcellularLocation>
</comment>
<comment type="domain">
    <text evidence="1">A Gly-cisPro motif from one monomer fits into the active site of the other monomer to allow specific chiral rejection of L-amino acids.</text>
</comment>
<comment type="similarity">
    <text evidence="1">Belongs to the DTD family.</text>
</comment>
<feature type="chain" id="PRO_1000127509" description="D-aminoacyl-tRNA deacylase">
    <location>
        <begin position="1"/>
        <end position="149"/>
    </location>
</feature>
<feature type="short sequence motif" description="Gly-cisPro motif, important for rejection of L-amino acids" evidence="1">
    <location>
        <begin position="137"/>
        <end position="138"/>
    </location>
</feature>
<reference key="1">
    <citation type="journal article" date="2007" name="PLoS ONE">
        <title>Analysis of the neurotoxin complex genes in Clostridium botulinum A1-A4 and B1 strains: BoNT/A3, /Ba4 and /B1 clusters are located within plasmids.</title>
        <authorList>
            <person name="Smith T.J."/>
            <person name="Hill K.K."/>
            <person name="Foley B.T."/>
            <person name="Detter J.C."/>
            <person name="Munk A.C."/>
            <person name="Bruce D.C."/>
            <person name="Doggett N.A."/>
            <person name="Smith L.A."/>
            <person name="Marks J.D."/>
            <person name="Xie G."/>
            <person name="Brettin T.S."/>
        </authorList>
    </citation>
    <scope>NUCLEOTIDE SEQUENCE [LARGE SCALE GENOMIC DNA]</scope>
    <source>
        <strain>Okra / Type B1</strain>
    </source>
</reference>
<name>DTD_CLOBK</name>
<accession>B1IME1</accession>
<keyword id="KW-0963">Cytoplasm</keyword>
<keyword id="KW-0378">Hydrolase</keyword>
<keyword id="KW-0694">RNA-binding</keyword>
<keyword id="KW-0820">tRNA-binding</keyword>
<sequence>MRAVVQRVISSKVEVDGKVIGSIGKGLNVLLGISKEDTEEDIKYLKEKIINLRIFEDENEKLNKSLLDIGGDIIIVSQFTLYGDCRKGRRPSFIEALGGEEAYILYNKFVESIKKEVNNVATGEFGADMKVYIENDGPVTILLDSKKTF</sequence>
<gene>
    <name evidence="1" type="primary">dtd</name>
    <name type="ordered locus">CLD_1482</name>
</gene>